<keyword id="KW-0150">Chloroplast</keyword>
<keyword id="KW-0507">mRNA processing</keyword>
<keyword id="KW-0934">Plastid</keyword>
<keyword id="KW-0694">RNA-binding</keyword>
<keyword id="KW-0819">tRNA processing</keyword>
<protein>
    <recommendedName>
        <fullName evidence="1">Maturase K</fullName>
    </recommendedName>
    <alternativeName>
        <fullName evidence="1">Intron maturase</fullName>
    </alternativeName>
</protein>
<reference key="1">
    <citation type="journal article" date="2008" name="Theor. Appl. Genet.">
        <title>The complete nucleotide sequence of the cassava (Manihot esculenta) chloroplast genome and the evolution of atpF in Malpighiales: RNA editing and multiple losses of a group II intron.</title>
        <authorList>
            <person name="Daniell H."/>
            <person name="Wurdack K.J."/>
            <person name="Kanagaraj A."/>
            <person name="Lee S.-B."/>
            <person name="Saski C."/>
            <person name="Jansen R.K."/>
        </authorList>
    </citation>
    <scope>NUCLEOTIDE SEQUENCE [LARGE SCALE GENOMIC DNA]</scope>
    <source>
        <strain>cv. TME3</strain>
    </source>
</reference>
<organism>
    <name type="scientific">Manihot esculenta</name>
    <name type="common">Cassava</name>
    <name type="synonym">Jatropha manihot</name>
    <dbReference type="NCBI Taxonomy" id="3983"/>
    <lineage>
        <taxon>Eukaryota</taxon>
        <taxon>Viridiplantae</taxon>
        <taxon>Streptophyta</taxon>
        <taxon>Embryophyta</taxon>
        <taxon>Tracheophyta</taxon>
        <taxon>Spermatophyta</taxon>
        <taxon>Magnoliopsida</taxon>
        <taxon>eudicotyledons</taxon>
        <taxon>Gunneridae</taxon>
        <taxon>Pentapetalae</taxon>
        <taxon>rosids</taxon>
        <taxon>fabids</taxon>
        <taxon>Malpighiales</taxon>
        <taxon>Euphorbiaceae</taxon>
        <taxon>Crotonoideae</taxon>
        <taxon>Manihoteae</taxon>
        <taxon>Manihot</taxon>
    </lineage>
</organism>
<proteinExistence type="inferred from homology"/>
<accession>B1NWD1</accession>
<geneLocation type="chloroplast"/>
<gene>
    <name evidence="1" type="primary">matK</name>
</gene>
<feature type="chain" id="PRO_0000355946" description="Maturase K">
    <location>
        <begin position="1"/>
        <end position="506"/>
    </location>
</feature>
<comment type="function">
    <text evidence="1">Usually encoded in the trnK tRNA gene intron. Probably assists in splicing its own and other chloroplast group II introns.</text>
</comment>
<comment type="subcellular location">
    <subcellularLocation>
        <location>Plastid</location>
        <location>Chloroplast</location>
    </subcellularLocation>
</comment>
<comment type="similarity">
    <text evidence="1">Belongs to the intron maturase 2 family. MatK subfamily.</text>
</comment>
<sequence>MEERYLELDRSRKNDFLYPFIFREYIYTFAHDHSLNRSILLENVGYDNKSSLLIVKRLITRMYQQNHLIISANDSNQNLFFRYNKNLYYQMISEGFAVIVEIPFSLRLVSSLDLERSEIVKSHKLRSIHSIFPFLEDKFPHLNYVSDILIPYPIHLEKLVQTLRYWVKDPSSLHLLRLFLHEYWNLNSLIIPKKFITIFIKRNPRFFLFLYNSHVYEYESIFFFLRNQSFHLRSIFLRVLLERIFFYGKIEHFAEVFANDFQAILWLFKDPFMHYVRYQGKSILASKDRPFLMKKWKYYLVNLCQCHFYVWFQPEKIYINSLSKHSLNFLGYLSNVQLNPLVVRSQMLENSFIIDKDSTMKKLDTIVPIIPLIGSLAKTKFCNAVGHPISKPIRADSADSDIIDRFVRICRNLSHYYSGSSKKKSLYRIKYILRLSCVKTLARKHKSTVRAFLKRLGSELLEEFFTEEEQILSLIFPKVSSSSRRLYRGRVWYLDIISINDLANHE</sequence>
<dbReference type="EMBL" id="EU117376">
    <property type="protein sequence ID" value="ABV66135.1"/>
    <property type="molecule type" value="Genomic_DNA"/>
</dbReference>
<dbReference type="RefSeq" id="YP_001718418.1">
    <property type="nucleotide sequence ID" value="NC_010433.1"/>
</dbReference>
<dbReference type="GeneID" id="5999999"/>
<dbReference type="KEGG" id="mesc:5999999"/>
<dbReference type="OrthoDB" id="1886907at2759"/>
<dbReference type="GO" id="GO:0009507">
    <property type="term" value="C:chloroplast"/>
    <property type="evidence" value="ECO:0007669"/>
    <property type="project" value="UniProtKB-SubCell"/>
</dbReference>
<dbReference type="GO" id="GO:0003723">
    <property type="term" value="F:RNA binding"/>
    <property type="evidence" value="ECO:0007669"/>
    <property type="project" value="UniProtKB-KW"/>
</dbReference>
<dbReference type="GO" id="GO:0006397">
    <property type="term" value="P:mRNA processing"/>
    <property type="evidence" value="ECO:0007669"/>
    <property type="project" value="UniProtKB-KW"/>
</dbReference>
<dbReference type="GO" id="GO:0008380">
    <property type="term" value="P:RNA splicing"/>
    <property type="evidence" value="ECO:0007669"/>
    <property type="project" value="UniProtKB-UniRule"/>
</dbReference>
<dbReference type="GO" id="GO:0008033">
    <property type="term" value="P:tRNA processing"/>
    <property type="evidence" value="ECO:0007669"/>
    <property type="project" value="UniProtKB-KW"/>
</dbReference>
<dbReference type="HAMAP" id="MF_01390">
    <property type="entry name" value="MatK"/>
    <property type="match status" value="1"/>
</dbReference>
<dbReference type="InterPro" id="IPR024937">
    <property type="entry name" value="Domain_X"/>
</dbReference>
<dbReference type="InterPro" id="IPR002866">
    <property type="entry name" value="Maturase_MatK"/>
</dbReference>
<dbReference type="InterPro" id="IPR024942">
    <property type="entry name" value="Maturase_MatK_N"/>
</dbReference>
<dbReference type="PANTHER" id="PTHR34811">
    <property type="entry name" value="MATURASE K"/>
    <property type="match status" value="1"/>
</dbReference>
<dbReference type="PANTHER" id="PTHR34811:SF1">
    <property type="entry name" value="MATURASE K"/>
    <property type="match status" value="1"/>
</dbReference>
<dbReference type="Pfam" id="PF01348">
    <property type="entry name" value="Intron_maturas2"/>
    <property type="match status" value="1"/>
</dbReference>
<dbReference type="Pfam" id="PF01824">
    <property type="entry name" value="MatK_N"/>
    <property type="match status" value="1"/>
</dbReference>
<evidence type="ECO:0000255" key="1">
    <source>
        <dbReference type="HAMAP-Rule" id="MF_01390"/>
    </source>
</evidence>
<name>MATK_MANES</name>